<comment type="function">
    <text evidence="1">DegP acts as a chaperone at low temperatures but switches to a peptidase (heat shock protein) at higher temperatures. It degrades transiently denatured and unfolded proteins which accumulate in the periplasm following heat shock or other stress conditions. DegP is efficient with Val-Xaa and Ile-Xaa peptide bonds, suggesting a preference for beta-branched side chain amino acids. Only unfolded proteins devoid of disulfide bonds appear capable of being cleaved, thereby preventing non-specific proteolysis of folded proteins. Its proteolytic activity is essential for the survival of cells at elevated temperatures. It can degrade IciA, ada, casein, globin and PapA. DegP shares specificity with DegQ. DegP is also involved in the biogenesis of partially folded outer-membrane proteins (OMP) (By similarity).</text>
</comment>
<comment type="catalytic activity">
    <reaction>
        <text>Acts on substrates that are at least partially unfolded. The cleavage site P1 residue is normally between a pair of hydrophobic residues, such as Val-|-Val.</text>
        <dbReference type="EC" id="3.4.21.107"/>
    </reaction>
</comment>
<comment type="subunit">
    <text evidence="1">DegP can reversibly switch between different oligomeric forms that represent inactive (6-mer) and active (12- and 24-mer) protease states. Substrate binding triggers the conversion of the resting DegP trimer and hexamer into catalytically active 12- and 24-mers. The conversion of 6-mer (DegP6) into 12-mer (DegP12) or 24-mer (DegP24) is crucial in regulating protease activity (By similarity).</text>
</comment>
<comment type="subcellular location">
    <subcellularLocation>
        <location evidence="1">Cell inner membrane</location>
        <topology evidence="1">Peripheral membrane protein</topology>
        <orientation evidence="1">Cytoplasmic side</orientation>
    </subcellularLocation>
</comment>
<comment type="miscellaneous">
    <text evidence="1">DegP is indispensable for bacterial survival at temperatures above 42 degrees Celsius, however is also able to digest its natural substrates in a reducing environment at temperatures as low as 20 degrees Celsius.</text>
</comment>
<comment type="similarity">
    <text evidence="4">Belongs to the peptidase S1C family.</text>
</comment>
<reference key="1">
    <citation type="journal article" date="2001" name="Nature">
        <title>Genome sequence of enterohaemorrhagic Escherichia coli O157:H7.</title>
        <authorList>
            <person name="Perna N.T."/>
            <person name="Plunkett G. III"/>
            <person name="Burland V."/>
            <person name="Mau B."/>
            <person name="Glasner J.D."/>
            <person name="Rose D.J."/>
            <person name="Mayhew G.F."/>
            <person name="Evans P.S."/>
            <person name="Gregor J."/>
            <person name="Kirkpatrick H.A."/>
            <person name="Posfai G."/>
            <person name="Hackett J."/>
            <person name="Klink S."/>
            <person name="Boutin A."/>
            <person name="Shao Y."/>
            <person name="Miller L."/>
            <person name="Grotbeck E.J."/>
            <person name="Davis N.W."/>
            <person name="Lim A."/>
            <person name="Dimalanta E.T."/>
            <person name="Potamousis K."/>
            <person name="Apodaca J."/>
            <person name="Anantharaman T.S."/>
            <person name="Lin J."/>
            <person name="Yen G."/>
            <person name="Schwartz D.C."/>
            <person name="Welch R.A."/>
            <person name="Blattner F.R."/>
        </authorList>
    </citation>
    <scope>NUCLEOTIDE SEQUENCE [LARGE SCALE GENOMIC DNA]</scope>
    <source>
        <strain>O157:H7 / EDL933 / ATCC 700927 / EHEC</strain>
    </source>
</reference>
<reference key="2">
    <citation type="journal article" date="2001" name="DNA Res.">
        <title>Complete genome sequence of enterohemorrhagic Escherichia coli O157:H7 and genomic comparison with a laboratory strain K-12.</title>
        <authorList>
            <person name="Hayashi T."/>
            <person name="Makino K."/>
            <person name="Ohnishi M."/>
            <person name="Kurokawa K."/>
            <person name="Ishii K."/>
            <person name="Yokoyama K."/>
            <person name="Han C.-G."/>
            <person name="Ohtsubo E."/>
            <person name="Nakayama K."/>
            <person name="Murata T."/>
            <person name="Tanaka M."/>
            <person name="Tobe T."/>
            <person name="Iida T."/>
            <person name="Takami H."/>
            <person name="Honda T."/>
            <person name="Sasakawa C."/>
            <person name="Ogasawara N."/>
            <person name="Yasunaga T."/>
            <person name="Kuhara S."/>
            <person name="Shiba T."/>
            <person name="Hattori M."/>
            <person name="Shinagawa H."/>
        </authorList>
    </citation>
    <scope>NUCLEOTIDE SEQUENCE [LARGE SCALE GENOMIC DNA]</scope>
    <source>
        <strain>O157:H7 / Sakai / RIMD 0509952 / EHEC</strain>
    </source>
</reference>
<sequence>MKKTTLALSALALSLGLALSPLSATAAETSSATTAQQMPSLAPMLEKVMPSVVSINVEGSTTVNTPRMPRNFQQFFGDDSPFCQEGSPFQSSPFCQGGQGGNGGGQQQKFMALGSGVIIDADKGYVVTNNHVVDNATVIKVQLSDGRKFDAKMVGKDPRSDIALIQIQNPKNLTAIKMADSDALRVGDYTVAIGNPFGLGETVTSGIVSALGRSGLNAENYENFIQTDAAINRGNSGGALVNLNGELIGINTAILAPDGGNIGIGFAIPSNMVKNLTSQMVEYGQVKRGELGIMGTELNSELAKAMKVDAQRGAFVSQVLPNSSAAKAGIKAGDVITSLNGKPISSFAALRAQVGTMPVGSKLTLGLLRDGKQVNVNLELQQSSQNQVDSSSIFNGIEGAEMSNKGKDQGVVVNNVKTGTPAAQIGLKKGDVIIGANQQAVKNIAELRKVLDSKPSVLALNIQRGDSTIYLLMQ</sequence>
<protein>
    <recommendedName>
        <fullName>Periplasmic serine endoprotease DegP</fullName>
        <ecNumber>3.4.21.107</ecNumber>
    </recommendedName>
    <alternativeName>
        <fullName>Heat shock protein DegP</fullName>
    </alternativeName>
    <alternativeName>
        <fullName>Protease Do</fullName>
    </alternativeName>
</protein>
<organism>
    <name type="scientific">Escherichia coli O157:H7</name>
    <dbReference type="NCBI Taxonomy" id="83334"/>
    <lineage>
        <taxon>Bacteria</taxon>
        <taxon>Pseudomonadati</taxon>
        <taxon>Pseudomonadota</taxon>
        <taxon>Gammaproteobacteria</taxon>
        <taxon>Enterobacterales</taxon>
        <taxon>Enterobacteriaceae</taxon>
        <taxon>Escherichia</taxon>
    </lineage>
</organism>
<keyword id="KW-0997">Cell inner membrane</keyword>
<keyword id="KW-1003">Cell membrane</keyword>
<keyword id="KW-1015">Disulfide bond</keyword>
<keyword id="KW-0378">Hydrolase</keyword>
<keyword id="KW-0472">Membrane</keyword>
<keyword id="KW-0645">Protease</keyword>
<keyword id="KW-1185">Reference proteome</keyword>
<keyword id="KW-0677">Repeat</keyword>
<keyword id="KW-0720">Serine protease</keyword>
<keyword id="KW-0732">Signal</keyword>
<keyword id="KW-0346">Stress response</keyword>
<name>DEGP_ECO57</name>
<evidence type="ECO:0000250" key="1"/>
<evidence type="ECO:0000250" key="2">
    <source>
        <dbReference type="UniProtKB" id="P0C0V0"/>
    </source>
</evidence>
<evidence type="ECO:0000255" key="3">
    <source>
        <dbReference type="PROSITE-ProRule" id="PRU00143"/>
    </source>
</evidence>
<evidence type="ECO:0000305" key="4"/>
<dbReference type="EC" id="3.4.21.107"/>
<dbReference type="EMBL" id="AE005174">
    <property type="protein sequence ID" value="AAG54465.1"/>
    <property type="molecule type" value="Genomic_DNA"/>
</dbReference>
<dbReference type="EMBL" id="BA000007">
    <property type="protein sequence ID" value="BAB33588.1"/>
    <property type="molecule type" value="Genomic_DNA"/>
</dbReference>
<dbReference type="PIR" id="S45229">
    <property type="entry name" value="S45229"/>
</dbReference>
<dbReference type="RefSeq" id="NP_308192.1">
    <property type="nucleotide sequence ID" value="NC_002695.1"/>
</dbReference>
<dbReference type="RefSeq" id="WP_000753946.1">
    <property type="nucleotide sequence ID" value="NZ_VOAI01000002.1"/>
</dbReference>
<dbReference type="SMR" id="P0C0V1"/>
<dbReference type="IntAct" id="P0C0V1">
    <property type="interactions" value="2"/>
</dbReference>
<dbReference type="STRING" id="155864.Z0173"/>
<dbReference type="MEROPS" id="S01.273"/>
<dbReference type="GeneID" id="913821"/>
<dbReference type="GeneID" id="93777263"/>
<dbReference type="KEGG" id="ece:Z0173"/>
<dbReference type="KEGG" id="ecs:ECs_0165"/>
<dbReference type="PATRIC" id="fig|386585.9.peg.265"/>
<dbReference type="eggNOG" id="COG0265">
    <property type="taxonomic scope" value="Bacteria"/>
</dbReference>
<dbReference type="HOGENOM" id="CLU_020120_1_1_6"/>
<dbReference type="OMA" id="RALFQIQ"/>
<dbReference type="Proteomes" id="UP000000558">
    <property type="component" value="Chromosome"/>
</dbReference>
<dbReference type="Proteomes" id="UP000002519">
    <property type="component" value="Chromosome"/>
</dbReference>
<dbReference type="GO" id="GO:0030288">
    <property type="term" value="C:outer membrane-bounded periplasmic space"/>
    <property type="evidence" value="ECO:0000250"/>
    <property type="project" value="UniProtKB"/>
</dbReference>
<dbReference type="GO" id="GO:0005886">
    <property type="term" value="C:plasma membrane"/>
    <property type="evidence" value="ECO:0007669"/>
    <property type="project" value="UniProtKB-SubCell"/>
</dbReference>
<dbReference type="GO" id="GO:0042802">
    <property type="term" value="F:identical protein binding"/>
    <property type="evidence" value="ECO:0000250"/>
    <property type="project" value="UniProtKB"/>
</dbReference>
<dbReference type="GO" id="GO:0004252">
    <property type="term" value="F:serine-type endopeptidase activity"/>
    <property type="evidence" value="ECO:0000250"/>
    <property type="project" value="UniProtKB"/>
</dbReference>
<dbReference type="GO" id="GO:0006457">
    <property type="term" value="P:protein folding"/>
    <property type="evidence" value="ECO:0000250"/>
    <property type="project" value="UniProtKB"/>
</dbReference>
<dbReference type="GO" id="GO:0006515">
    <property type="term" value="P:protein quality control for misfolded or incompletely synthesized proteins"/>
    <property type="evidence" value="ECO:0000250"/>
    <property type="project" value="UniProtKB"/>
</dbReference>
<dbReference type="GO" id="GO:0006508">
    <property type="term" value="P:proteolysis"/>
    <property type="evidence" value="ECO:0000250"/>
    <property type="project" value="UniProtKB"/>
</dbReference>
<dbReference type="GO" id="GO:0006979">
    <property type="term" value="P:response to oxidative stress"/>
    <property type="evidence" value="ECO:0000250"/>
    <property type="project" value="UniProtKB"/>
</dbReference>
<dbReference type="GO" id="GO:0009266">
    <property type="term" value="P:response to temperature stimulus"/>
    <property type="evidence" value="ECO:0000250"/>
    <property type="project" value="UniProtKB"/>
</dbReference>
<dbReference type="CDD" id="cd10839">
    <property type="entry name" value="cpPDZ1_DegP-like"/>
    <property type="match status" value="1"/>
</dbReference>
<dbReference type="CDD" id="cd23084">
    <property type="entry name" value="cpPDZ2_DegP-like"/>
    <property type="match status" value="1"/>
</dbReference>
<dbReference type="FunFam" id="2.30.42.10:FF:000037">
    <property type="entry name" value="Periplasmic serine endoprotease DegP-like"/>
    <property type="match status" value="1"/>
</dbReference>
<dbReference type="FunFam" id="2.30.42.10:FF:000050">
    <property type="entry name" value="Periplasmic serine endoprotease DegP-like"/>
    <property type="match status" value="1"/>
</dbReference>
<dbReference type="FunFam" id="2.40.10.120:FF:000001">
    <property type="entry name" value="Periplasmic serine endoprotease DegP-like"/>
    <property type="match status" value="1"/>
</dbReference>
<dbReference type="FunFam" id="2.40.10.10:FF:000001">
    <property type="entry name" value="Periplasmic serine protease DegS"/>
    <property type="match status" value="1"/>
</dbReference>
<dbReference type="Gene3D" id="2.30.42.10">
    <property type="match status" value="2"/>
</dbReference>
<dbReference type="Gene3D" id="2.40.10.120">
    <property type="match status" value="1"/>
</dbReference>
<dbReference type="InterPro" id="IPR001478">
    <property type="entry name" value="PDZ"/>
</dbReference>
<dbReference type="InterPro" id="IPR036034">
    <property type="entry name" value="PDZ_sf"/>
</dbReference>
<dbReference type="InterPro" id="IPR011782">
    <property type="entry name" value="Pept_S1C_Do"/>
</dbReference>
<dbReference type="InterPro" id="IPR009003">
    <property type="entry name" value="Peptidase_S1_PA"/>
</dbReference>
<dbReference type="InterPro" id="IPR001940">
    <property type="entry name" value="Peptidase_S1C"/>
</dbReference>
<dbReference type="NCBIfam" id="TIGR02037">
    <property type="entry name" value="degP_htrA_DO"/>
    <property type="match status" value="1"/>
</dbReference>
<dbReference type="NCBIfam" id="NF008189">
    <property type="entry name" value="PRK10942.1"/>
    <property type="match status" value="1"/>
</dbReference>
<dbReference type="PANTHER" id="PTHR22939">
    <property type="entry name" value="SERINE PROTEASE FAMILY S1C HTRA-RELATED"/>
    <property type="match status" value="1"/>
</dbReference>
<dbReference type="PANTHER" id="PTHR22939:SF129">
    <property type="entry name" value="SERINE PROTEASE HTRA2, MITOCHONDRIAL"/>
    <property type="match status" value="1"/>
</dbReference>
<dbReference type="Pfam" id="PF00595">
    <property type="entry name" value="PDZ"/>
    <property type="match status" value="2"/>
</dbReference>
<dbReference type="Pfam" id="PF13365">
    <property type="entry name" value="Trypsin_2"/>
    <property type="match status" value="1"/>
</dbReference>
<dbReference type="PRINTS" id="PR00834">
    <property type="entry name" value="PROTEASES2C"/>
</dbReference>
<dbReference type="SMART" id="SM00228">
    <property type="entry name" value="PDZ"/>
    <property type="match status" value="2"/>
</dbReference>
<dbReference type="SUPFAM" id="SSF50156">
    <property type="entry name" value="PDZ domain-like"/>
    <property type="match status" value="2"/>
</dbReference>
<dbReference type="SUPFAM" id="SSF50494">
    <property type="entry name" value="Trypsin-like serine proteases"/>
    <property type="match status" value="1"/>
</dbReference>
<dbReference type="PROSITE" id="PS50106">
    <property type="entry name" value="PDZ"/>
    <property type="match status" value="2"/>
</dbReference>
<proteinExistence type="inferred from homology"/>
<feature type="signal peptide" evidence="1">
    <location>
        <begin position="1"/>
        <end position="26"/>
    </location>
</feature>
<feature type="chain" id="PRO_0000045160" description="Periplasmic serine endoprotease DegP">
    <location>
        <begin position="27"/>
        <end position="474"/>
    </location>
</feature>
<feature type="domain" description="PDZ 1" evidence="3">
    <location>
        <begin position="280"/>
        <end position="371"/>
    </location>
</feature>
<feature type="domain" description="PDZ 2" evidence="3">
    <location>
        <begin position="377"/>
        <end position="466"/>
    </location>
</feature>
<feature type="active site" description="Charge relay system" evidence="2">
    <location>
        <position position="131"/>
    </location>
</feature>
<feature type="active site" description="Charge relay system" evidence="2">
    <location>
        <position position="161"/>
    </location>
</feature>
<feature type="active site" description="Charge relay system" evidence="2">
    <location>
        <position position="236"/>
    </location>
</feature>
<feature type="binding site" evidence="1">
    <location>
        <position position="58"/>
    </location>
    <ligand>
        <name>substrate</name>
    </ligand>
</feature>
<feature type="binding site" evidence="1">
    <location>
        <position position="131"/>
    </location>
    <ligand>
        <name>substrate</name>
    </ligand>
</feature>
<feature type="binding site" evidence="1">
    <location>
        <position position="161"/>
    </location>
    <ligand>
        <name>substrate</name>
    </ligand>
</feature>
<feature type="binding site" evidence="1">
    <location>
        <begin position="234"/>
        <end position="236"/>
    </location>
    <ligand>
        <name>substrate</name>
    </ligand>
</feature>
<feature type="binding site" evidence="1">
    <location>
        <begin position="252"/>
        <end position="256"/>
    </location>
    <ligand>
        <name>substrate</name>
    </ligand>
</feature>
<feature type="binding site" evidence="1">
    <location>
        <begin position="291"/>
        <end position="295"/>
    </location>
    <ligand>
        <name>substrate</name>
    </ligand>
</feature>
<feature type="disulfide bond" evidence="1">
    <location>
        <begin position="83"/>
        <end position="95"/>
    </location>
</feature>
<accession>P0C0V1</accession>
<accession>P09376</accession>
<accession>P15724</accession>
<gene>
    <name type="primary">degP</name>
    <name type="synonym">htrA</name>
    <name type="synonym">ptd</name>
    <name type="ordered locus">Z0173</name>
    <name type="ordered locus">ECs0165</name>
</gene>